<proteinExistence type="evidence at transcript level"/>
<accession>Q4G074</accession>
<gene>
    <name type="primary">Kifbp</name>
    <name type="synonym">Kbp</name>
</gene>
<reference key="1">
    <citation type="journal article" date="2004" name="Genome Res.">
        <title>The status, quality, and expansion of the NIH full-length cDNA project: the Mammalian Gene Collection (MGC).</title>
        <authorList>
            <consortium name="The MGC Project Team"/>
        </authorList>
    </citation>
    <scope>NUCLEOTIDE SEQUENCE [LARGE SCALE MRNA]</scope>
    <source>
        <tissue>Thymus</tissue>
    </source>
</reference>
<reference key="2">
    <citation type="journal article" date="2010" name="Hum. Mol. Genet.">
        <title>KBP interacts with SCG10, linking Goldberg-Shprintzen syndrome to microtubule dynamics and neuronal differentiation.</title>
        <authorList>
            <person name="Alves M.M."/>
            <person name="Burzynski G."/>
            <person name="Delalande J.M."/>
            <person name="Osinga J."/>
            <person name="van der Goot A."/>
            <person name="Dolga A.M."/>
            <person name="de Graaff E."/>
            <person name="Brooks A.S."/>
            <person name="Metzger M."/>
            <person name="Eisel U.L."/>
            <person name="Shepherd I."/>
            <person name="Eggen B.J."/>
            <person name="Hofstra R.M."/>
        </authorList>
    </citation>
    <scope>FUNCTION</scope>
</reference>
<comment type="function">
    <text evidence="1 3">Activator of KIF1B plus-end-directed microtubule motor activity (By similarity). Required for organization of axonal microtubules, and axonal outgrowth and maintenance during peripheral and central nervous system development (PubMed:20621975).</text>
</comment>
<comment type="subunit">
    <text evidence="1">Interacts with KIF1B; positively regulates KIF1B microtubule motor activity. Interacts with STMN2.</text>
</comment>
<comment type="subcellular location">
    <subcellularLocation>
        <location evidence="1">Cytoplasm</location>
        <location evidence="1">Cytoskeleton</location>
    </subcellularLocation>
</comment>
<comment type="similarity">
    <text evidence="4">Belongs to the KIF-binding protein family.</text>
</comment>
<evidence type="ECO:0000250" key="1">
    <source>
        <dbReference type="UniProtKB" id="Q96EK5"/>
    </source>
</evidence>
<evidence type="ECO:0000256" key="2">
    <source>
        <dbReference type="SAM" id="MobiDB-lite"/>
    </source>
</evidence>
<evidence type="ECO:0000269" key="3">
    <source>
    </source>
</evidence>
<evidence type="ECO:0000305" key="4"/>
<dbReference type="EMBL" id="BC098692">
    <property type="protein sequence ID" value="AAH98692.1"/>
    <property type="molecule type" value="mRNA"/>
</dbReference>
<dbReference type="RefSeq" id="NP_001026797.1">
    <property type="nucleotide sequence ID" value="NM_001031627.1"/>
</dbReference>
<dbReference type="SMR" id="Q4G074"/>
<dbReference type="FunCoup" id="Q4G074">
    <property type="interactions" value="3180"/>
</dbReference>
<dbReference type="STRING" id="10116.ENSRNOP00000000444"/>
<dbReference type="PhosphoSitePlus" id="Q4G074"/>
<dbReference type="jPOST" id="Q4G074"/>
<dbReference type="PaxDb" id="10116-ENSRNOP00000000444"/>
<dbReference type="GeneID" id="606294"/>
<dbReference type="KEGG" id="rno:606294"/>
<dbReference type="UCSC" id="RGD:1593126">
    <property type="organism name" value="rat"/>
</dbReference>
<dbReference type="AGR" id="RGD:1593126"/>
<dbReference type="CTD" id="26128"/>
<dbReference type="RGD" id="1593126">
    <property type="gene designation" value="Kifbp"/>
</dbReference>
<dbReference type="eggNOG" id="ENOG502QPZT">
    <property type="taxonomic scope" value="Eukaryota"/>
</dbReference>
<dbReference type="InParanoid" id="Q4G074"/>
<dbReference type="OrthoDB" id="409897at2759"/>
<dbReference type="PhylomeDB" id="Q4G074"/>
<dbReference type="PRO" id="PR:Q4G074"/>
<dbReference type="Proteomes" id="UP000002494">
    <property type="component" value="Unplaced"/>
</dbReference>
<dbReference type="GO" id="GO:0005856">
    <property type="term" value="C:cytoskeleton"/>
    <property type="evidence" value="ECO:0007669"/>
    <property type="project" value="UniProtKB-SubCell"/>
</dbReference>
<dbReference type="GO" id="GO:0005739">
    <property type="term" value="C:mitochondrion"/>
    <property type="evidence" value="ECO:0000250"/>
    <property type="project" value="UniProtKB"/>
</dbReference>
<dbReference type="GO" id="GO:0019894">
    <property type="term" value="F:kinesin binding"/>
    <property type="evidence" value="ECO:0000266"/>
    <property type="project" value="RGD"/>
</dbReference>
<dbReference type="GO" id="GO:0140311">
    <property type="term" value="F:protein sequestering activity"/>
    <property type="evidence" value="ECO:0000266"/>
    <property type="project" value="RGD"/>
</dbReference>
<dbReference type="GO" id="GO:0021952">
    <property type="term" value="P:central nervous system projection neuron axonogenesis"/>
    <property type="evidence" value="ECO:0000318"/>
    <property type="project" value="GO_Central"/>
</dbReference>
<dbReference type="GO" id="GO:0001701">
    <property type="term" value="P:in utero embryonic development"/>
    <property type="evidence" value="ECO:0000266"/>
    <property type="project" value="RGD"/>
</dbReference>
<dbReference type="GO" id="GO:0000226">
    <property type="term" value="P:microtubule cytoskeleton organization"/>
    <property type="evidence" value="ECO:0000318"/>
    <property type="project" value="GO_Central"/>
</dbReference>
<dbReference type="GO" id="GO:0047497">
    <property type="term" value="P:mitochondrion transport along microtubule"/>
    <property type="evidence" value="ECO:0000250"/>
    <property type="project" value="UniProtKB"/>
</dbReference>
<dbReference type="GO" id="GO:1990535">
    <property type="term" value="P:neuron projection maintenance"/>
    <property type="evidence" value="ECO:0000318"/>
    <property type="project" value="GO_Central"/>
</dbReference>
<dbReference type="GO" id="GO:0010970">
    <property type="term" value="P:transport along microtubule"/>
    <property type="evidence" value="ECO:0000266"/>
    <property type="project" value="RGD"/>
</dbReference>
<dbReference type="Gene3D" id="1.25.40.10">
    <property type="entry name" value="Tetratricopeptide repeat domain"/>
    <property type="match status" value="1"/>
</dbReference>
<dbReference type="InterPro" id="IPR022083">
    <property type="entry name" value="KBP"/>
</dbReference>
<dbReference type="InterPro" id="IPR011990">
    <property type="entry name" value="TPR-like_helical_dom_sf"/>
</dbReference>
<dbReference type="PANTHER" id="PTHR46321:SF1">
    <property type="entry name" value="KIF-BINDING PROTEIN"/>
    <property type="match status" value="1"/>
</dbReference>
<dbReference type="PANTHER" id="PTHR46321">
    <property type="entry name" value="KIF1-BINDING PROTEIN"/>
    <property type="match status" value="1"/>
</dbReference>
<dbReference type="Pfam" id="PF12309">
    <property type="entry name" value="KBP_C"/>
    <property type="match status" value="1"/>
</dbReference>
<dbReference type="SUPFAM" id="SSF48452">
    <property type="entry name" value="TPR-like"/>
    <property type="match status" value="1"/>
</dbReference>
<name>KBP_RAT</name>
<organism>
    <name type="scientific">Rattus norvegicus</name>
    <name type="common">Rat</name>
    <dbReference type="NCBI Taxonomy" id="10116"/>
    <lineage>
        <taxon>Eukaryota</taxon>
        <taxon>Metazoa</taxon>
        <taxon>Chordata</taxon>
        <taxon>Craniata</taxon>
        <taxon>Vertebrata</taxon>
        <taxon>Euteleostomi</taxon>
        <taxon>Mammalia</taxon>
        <taxon>Eutheria</taxon>
        <taxon>Euarchontoglires</taxon>
        <taxon>Glires</taxon>
        <taxon>Rodentia</taxon>
        <taxon>Myomorpha</taxon>
        <taxon>Muroidea</taxon>
        <taxon>Muridae</taxon>
        <taxon>Murinae</taxon>
        <taxon>Rattus</taxon>
    </lineage>
</organism>
<keyword id="KW-0963">Cytoplasm</keyword>
<keyword id="KW-0206">Cytoskeleton</keyword>
<keyword id="KW-0217">Developmental protein</keyword>
<keyword id="KW-0221">Differentiation</keyword>
<keyword id="KW-0524">Neurogenesis</keyword>
<keyword id="KW-0597">Phosphoprotein</keyword>
<keyword id="KW-1185">Reference proteome</keyword>
<feature type="chain" id="PRO_0000334517" description="KIF-binding protein">
    <location>
        <begin position="1"/>
        <end position="617"/>
    </location>
</feature>
<feature type="region of interest" description="Disordered" evidence="2">
    <location>
        <begin position="48"/>
        <end position="83"/>
    </location>
</feature>
<feature type="modified residue" description="Phosphoserine" evidence="1">
    <location>
        <position position="174"/>
    </location>
</feature>
<sequence>MAGAPGPEIREKFQAALALSRVELHKNPEKEPYKSKYGARALLEEVRALLGPAPEDDDERAADDGPVDQALGAGEPRDAEGPGAQRALRLAVVEFHLGVNHIDTEELSAGEEHLVRCLSLLRPYRLSLGCVSLFIQAQNNLGILWSEREEIETARTYLESSEALYNQYMKEIGSPPLDPTEHFLPEEEKLTEQERSKRFEKVYTHNLYYLAQVYQHMEMFEKAAHYCHSTLKRQLEHNAYHPMEWAINAATLSQFYINKLCFMEARHCLSAANVIFGQTGKITATEDTPEVEGDMPELYHQRKGEIARCWIKYCLTLMQNAQLSMQDNIGELDLDKQSELRALRRKELDEEESVRKRAVQFGTGELRDAISAVEEKVRYLRPLDFEEARELFLLGQHYVYEAKEFFQIDGYVTDHIEVVQDHSALFKVLAFFEADMERRCKMHKRRIAMLEPLIVDLNPQYYQLVNRQIQFEIAHAYYDMMDLKVAIADKLREPDSHTVKKINSLNQSALKYYQLFLDSLRDPNKVFPEHIGEDVLRPAMLAKFRVARLYGKIITADPKKELENLATSLEHYKFIVDYCETHPEAAQEIEVELELSKEMVSLLPTKMERFRAKMALT</sequence>
<protein>
    <recommendedName>
        <fullName>KIF-binding protein</fullName>
    </recommendedName>
    <alternativeName>
        <fullName>KIF1-binding protein</fullName>
    </alternativeName>
</protein>